<name>ILVD_BLOFL</name>
<reference key="1">
    <citation type="journal article" date="2003" name="Proc. Natl. Acad. Sci. U.S.A.">
        <title>The genome sequence of Blochmannia floridanus: comparative analysis of reduced genomes.</title>
        <authorList>
            <person name="Gil R."/>
            <person name="Silva F.J."/>
            <person name="Zientz E."/>
            <person name="Delmotte F."/>
            <person name="Gonzalez-Candelas F."/>
            <person name="Latorre A."/>
            <person name="Rausell C."/>
            <person name="Kamerbeek J."/>
            <person name="Gadau J."/>
            <person name="Hoelldobler B."/>
            <person name="van Ham R.C.H.J."/>
            <person name="Gross R."/>
            <person name="Moya A."/>
        </authorList>
    </citation>
    <scope>NUCLEOTIDE SEQUENCE [LARGE SCALE GENOMIC DNA]</scope>
</reference>
<comment type="function">
    <text evidence="1">Functions in the biosynthesis of branched-chain amino acids. Catalyzes the dehydration of (2R,3R)-2,3-dihydroxy-3-methylpentanoate (2,3-dihydroxy-3-methylvalerate) into 2-oxo-3-methylpentanoate (2-oxo-3-methylvalerate) and of (2R)-2,3-dihydroxy-3-methylbutanoate (2,3-dihydroxyisovalerate) into 2-oxo-3-methylbutanoate (2-oxoisovalerate), the penultimate precursor to L-isoleucine and L-valine, respectively.</text>
</comment>
<comment type="catalytic activity">
    <reaction evidence="1">
        <text>(2R)-2,3-dihydroxy-3-methylbutanoate = 3-methyl-2-oxobutanoate + H2O</text>
        <dbReference type="Rhea" id="RHEA:24809"/>
        <dbReference type="ChEBI" id="CHEBI:11851"/>
        <dbReference type="ChEBI" id="CHEBI:15377"/>
        <dbReference type="ChEBI" id="CHEBI:49072"/>
        <dbReference type="EC" id="4.2.1.9"/>
    </reaction>
    <physiologicalReaction direction="left-to-right" evidence="1">
        <dbReference type="Rhea" id="RHEA:24810"/>
    </physiologicalReaction>
</comment>
<comment type="catalytic activity">
    <reaction evidence="1">
        <text>(2R,3R)-2,3-dihydroxy-3-methylpentanoate = (S)-3-methyl-2-oxopentanoate + H2O</text>
        <dbReference type="Rhea" id="RHEA:27694"/>
        <dbReference type="ChEBI" id="CHEBI:15377"/>
        <dbReference type="ChEBI" id="CHEBI:35146"/>
        <dbReference type="ChEBI" id="CHEBI:49258"/>
        <dbReference type="EC" id="4.2.1.9"/>
    </reaction>
    <physiologicalReaction direction="left-to-right" evidence="1">
        <dbReference type="Rhea" id="RHEA:27695"/>
    </physiologicalReaction>
</comment>
<comment type="cofactor">
    <cofactor evidence="1">
        <name>[2Fe-2S] cluster</name>
        <dbReference type="ChEBI" id="CHEBI:190135"/>
    </cofactor>
    <text evidence="1">Binds 1 [2Fe-2S] cluster per subunit. This cluster acts as a Lewis acid cofactor.</text>
</comment>
<comment type="cofactor">
    <cofactor evidence="1">
        <name>Mg(2+)</name>
        <dbReference type="ChEBI" id="CHEBI:18420"/>
    </cofactor>
</comment>
<comment type="pathway">
    <text evidence="1">Amino-acid biosynthesis; L-isoleucine biosynthesis; L-isoleucine from 2-oxobutanoate: step 3/4.</text>
</comment>
<comment type="pathway">
    <text evidence="1">Amino-acid biosynthesis; L-valine biosynthesis; L-valine from pyruvate: step 3/4.</text>
</comment>
<comment type="subunit">
    <text evidence="1">Homodimer.</text>
</comment>
<comment type="similarity">
    <text evidence="1">Belongs to the IlvD/Edd family.</text>
</comment>
<sequence length="618" mass="67265">MPKYRSSTTTQGRNMAGARALWRATGMNSGDFNKIIVAVVNSFTQFVPGHVHLRNVGKLVSEEIYINGGVAKEFNTIAIDDGIAMGHSGMLYSLPSRDLIADSVEYVINAHCVDAMVCISNCDKITPGMLMAALRLNIPTVFVSGGPMESGSVTLSRYNNSSDVKLSLVDAITASANPNITDIDKEQIELEACPTCGSCSGMFTANSMNCLMEVLGLAQPGNGSLLATHFDRKEMFLNAGRYIMNLSRLYYEKDNSIVLPRNIANKMAFENAAMLDIAMGGSTNTVLHLLAAAQEGEISFTMKDIDRLSRKVPHLCKIAPNSDRYYMEDFHRAGGVMGILGELQRCGLLYENTYNILNKSLLDTLRQYDIKLCQDLEIKRMYAAAPAGVRTIKPFSQNNRWNSLDIDRFAGCIRSQEYAYSQDGGLAVLYGNLAPKGCLVKTAGVISELKSFRGPAKVYESQEESVQAILTGQVCSGDVVVIRYEGPKGGPGMQEMLYPTSFLRSMGLDLHCALITDGRFSGGTSGLSVGHISPEAASAGLIGLVCDGDMININISKRSIVLEVSDYVLKNRYEIEISRGTKAWTPSCRNRDVSFSLKAYAKLVTSADTGAVRDRSQL</sequence>
<organism>
    <name type="scientific">Blochmanniella floridana</name>
    <dbReference type="NCBI Taxonomy" id="203907"/>
    <lineage>
        <taxon>Bacteria</taxon>
        <taxon>Pseudomonadati</taxon>
        <taxon>Pseudomonadota</taxon>
        <taxon>Gammaproteobacteria</taxon>
        <taxon>Enterobacterales</taxon>
        <taxon>Enterobacteriaceae</taxon>
        <taxon>ant endosymbionts</taxon>
        <taxon>Candidatus Blochmanniella</taxon>
    </lineage>
</organism>
<protein>
    <recommendedName>
        <fullName evidence="1">Dihydroxy-acid dehydratase</fullName>
        <shortName evidence="1">DAD</shortName>
        <ecNumber evidence="1">4.2.1.9</ecNumber>
    </recommendedName>
</protein>
<evidence type="ECO:0000255" key="1">
    <source>
        <dbReference type="HAMAP-Rule" id="MF_00012"/>
    </source>
</evidence>
<keyword id="KW-0001">2Fe-2S</keyword>
<keyword id="KW-0028">Amino-acid biosynthesis</keyword>
<keyword id="KW-0100">Branched-chain amino acid biosynthesis</keyword>
<keyword id="KW-0408">Iron</keyword>
<keyword id="KW-0411">Iron-sulfur</keyword>
<keyword id="KW-0456">Lyase</keyword>
<keyword id="KW-0460">Magnesium</keyword>
<keyword id="KW-0479">Metal-binding</keyword>
<keyword id="KW-1185">Reference proteome</keyword>
<proteinExistence type="inferred from homology"/>
<gene>
    <name evidence="1" type="primary">ilvD</name>
    <name type="ordered locus">Bfl590</name>
</gene>
<accession>Q7VRL8</accession>
<dbReference type="EC" id="4.2.1.9" evidence="1"/>
<dbReference type="EMBL" id="BX248583">
    <property type="protein sequence ID" value="CAD83268.1"/>
    <property type="molecule type" value="Genomic_DNA"/>
</dbReference>
<dbReference type="SMR" id="Q7VRL8"/>
<dbReference type="STRING" id="203907.Bfl590"/>
<dbReference type="KEGG" id="bfl:Bfl590"/>
<dbReference type="eggNOG" id="COG0129">
    <property type="taxonomic scope" value="Bacteria"/>
</dbReference>
<dbReference type="HOGENOM" id="CLU_014271_4_2_6"/>
<dbReference type="OrthoDB" id="9807077at2"/>
<dbReference type="UniPathway" id="UPA00047">
    <property type="reaction ID" value="UER00057"/>
</dbReference>
<dbReference type="UniPathway" id="UPA00049">
    <property type="reaction ID" value="UER00061"/>
</dbReference>
<dbReference type="Proteomes" id="UP000002192">
    <property type="component" value="Chromosome"/>
</dbReference>
<dbReference type="GO" id="GO:0005829">
    <property type="term" value="C:cytosol"/>
    <property type="evidence" value="ECO:0007669"/>
    <property type="project" value="TreeGrafter"/>
</dbReference>
<dbReference type="GO" id="GO:0051537">
    <property type="term" value="F:2 iron, 2 sulfur cluster binding"/>
    <property type="evidence" value="ECO:0007669"/>
    <property type="project" value="UniProtKB-UniRule"/>
</dbReference>
<dbReference type="GO" id="GO:0004160">
    <property type="term" value="F:dihydroxy-acid dehydratase activity"/>
    <property type="evidence" value="ECO:0007669"/>
    <property type="project" value="UniProtKB-UniRule"/>
</dbReference>
<dbReference type="GO" id="GO:0000287">
    <property type="term" value="F:magnesium ion binding"/>
    <property type="evidence" value="ECO:0007669"/>
    <property type="project" value="UniProtKB-UniRule"/>
</dbReference>
<dbReference type="GO" id="GO:0009097">
    <property type="term" value="P:isoleucine biosynthetic process"/>
    <property type="evidence" value="ECO:0007669"/>
    <property type="project" value="UniProtKB-UniRule"/>
</dbReference>
<dbReference type="GO" id="GO:0009099">
    <property type="term" value="P:L-valine biosynthetic process"/>
    <property type="evidence" value="ECO:0007669"/>
    <property type="project" value="UniProtKB-UniRule"/>
</dbReference>
<dbReference type="FunFam" id="3.50.30.80:FF:000001">
    <property type="entry name" value="Dihydroxy-acid dehydratase"/>
    <property type="match status" value="1"/>
</dbReference>
<dbReference type="Gene3D" id="3.50.30.80">
    <property type="entry name" value="IlvD/EDD C-terminal domain-like"/>
    <property type="match status" value="1"/>
</dbReference>
<dbReference type="HAMAP" id="MF_00012">
    <property type="entry name" value="IlvD"/>
    <property type="match status" value="1"/>
</dbReference>
<dbReference type="InterPro" id="IPR042096">
    <property type="entry name" value="Dihydro-acid_dehy_C"/>
</dbReference>
<dbReference type="InterPro" id="IPR004404">
    <property type="entry name" value="DihydroxyA_deHydtase"/>
</dbReference>
<dbReference type="InterPro" id="IPR020558">
    <property type="entry name" value="DiOHA_6PGluconate_deHydtase_CS"/>
</dbReference>
<dbReference type="InterPro" id="IPR056740">
    <property type="entry name" value="ILV_EDD_C"/>
</dbReference>
<dbReference type="InterPro" id="IPR000581">
    <property type="entry name" value="ILV_EDD_N"/>
</dbReference>
<dbReference type="InterPro" id="IPR037237">
    <property type="entry name" value="IlvD/EDD_N"/>
</dbReference>
<dbReference type="NCBIfam" id="TIGR00110">
    <property type="entry name" value="ilvD"/>
    <property type="match status" value="1"/>
</dbReference>
<dbReference type="NCBIfam" id="NF009103">
    <property type="entry name" value="PRK12448.1"/>
    <property type="match status" value="1"/>
</dbReference>
<dbReference type="PANTHER" id="PTHR43661">
    <property type="entry name" value="D-XYLONATE DEHYDRATASE"/>
    <property type="match status" value="1"/>
</dbReference>
<dbReference type="PANTHER" id="PTHR43661:SF3">
    <property type="entry name" value="D-XYLONATE DEHYDRATASE YAGF-RELATED"/>
    <property type="match status" value="1"/>
</dbReference>
<dbReference type="Pfam" id="PF24877">
    <property type="entry name" value="ILV_EDD_C"/>
    <property type="match status" value="1"/>
</dbReference>
<dbReference type="Pfam" id="PF00920">
    <property type="entry name" value="ILVD_EDD_N"/>
    <property type="match status" value="1"/>
</dbReference>
<dbReference type="SUPFAM" id="SSF143975">
    <property type="entry name" value="IlvD/EDD N-terminal domain-like"/>
    <property type="match status" value="1"/>
</dbReference>
<dbReference type="SUPFAM" id="SSF52016">
    <property type="entry name" value="LeuD/IlvD-like"/>
    <property type="match status" value="1"/>
</dbReference>
<dbReference type="PROSITE" id="PS00886">
    <property type="entry name" value="ILVD_EDD_1"/>
    <property type="match status" value="1"/>
</dbReference>
<dbReference type="PROSITE" id="PS00887">
    <property type="entry name" value="ILVD_EDD_2"/>
    <property type="match status" value="1"/>
</dbReference>
<feature type="chain" id="PRO_0000103454" description="Dihydroxy-acid dehydratase">
    <location>
        <begin position="1"/>
        <end position="618"/>
    </location>
</feature>
<feature type="active site" description="Proton acceptor" evidence="1">
    <location>
        <position position="521"/>
    </location>
</feature>
<feature type="binding site" evidence="1">
    <location>
        <position position="81"/>
    </location>
    <ligand>
        <name>Mg(2+)</name>
        <dbReference type="ChEBI" id="CHEBI:18420"/>
    </ligand>
</feature>
<feature type="binding site" evidence="1">
    <location>
        <position position="122"/>
    </location>
    <ligand>
        <name>[2Fe-2S] cluster</name>
        <dbReference type="ChEBI" id="CHEBI:190135"/>
    </ligand>
</feature>
<feature type="binding site" evidence="1">
    <location>
        <position position="123"/>
    </location>
    <ligand>
        <name>Mg(2+)</name>
        <dbReference type="ChEBI" id="CHEBI:18420"/>
    </ligand>
</feature>
<feature type="binding site" description="via carbamate group" evidence="1">
    <location>
        <position position="124"/>
    </location>
    <ligand>
        <name>Mg(2+)</name>
        <dbReference type="ChEBI" id="CHEBI:18420"/>
    </ligand>
</feature>
<feature type="binding site" evidence="1">
    <location>
        <position position="199"/>
    </location>
    <ligand>
        <name>[2Fe-2S] cluster</name>
        <dbReference type="ChEBI" id="CHEBI:190135"/>
    </ligand>
</feature>
<feature type="binding site" evidence="1">
    <location>
        <position position="495"/>
    </location>
    <ligand>
        <name>Mg(2+)</name>
        <dbReference type="ChEBI" id="CHEBI:18420"/>
    </ligand>
</feature>
<feature type="modified residue" description="N6-carboxylysine" evidence="1">
    <location>
        <position position="124"/>
    </location>
</feature>